<organism>
    <name type="scientific">Homo sapiens</name>
    <name type="common">Human</name>
    <dbReference type="NCBI Taxonomy" id="9606"/>
    <lineage>
        <taxon>Eukaryota</taxon>
        <taxon>Metazoa</taxon>
        <taxon>Chordata</taxon>
        <taxon>Craniata</taxon>
        <taxon>Vertebrata</taxon>
        <taxon>Euteleostomi</taxon>
        <taxon>Mammalia</taxon>
        <taxon>Eutheria</taxon>
        <taxon>Euarchontoglires</taxon>
        <taxon>Primates</taxon>
        <taxon>Haplorrhini</taxon>
        <taxon>Catarrhini</taxon>
        <taxon>Hominidae</taxon>
        <taxon>Homo</taxon>
    </lineage>
</organism>
<gene>
    <name type="primary">ACTR10</name>
    <name type="synonym">ACTR11</name>
    <name type="synonym">ARP10</name>
    <name type="synonym">ARP11</name>
</gene>
<sequence length="417" mass="46307">MPLYEGLGSGGEKTAVVIDLGEAFTKCGFAGETGPRCIIPSVIKRAGMPKPVRVVQYNINTEELYSYLKEFIHILYFRHLLVNPRDRRVVIIESVLCPSHFRETLTRVLFKYFEVPSVLLAPSHLMALLTLGINSAMVLDCGYRESLVLPIYEGIPVLNCWGALPLGGKALHKELETQLLEQCTVDTSVAKEQSLPSVMGSVPEGVLEDIKARTCFVSDLKRGLKIQAAKFNIDGNNERPSPPPNVDYPLDGEKILHILGSIRDSVVEILFEQDNEEQSVATLILDSLIQCPIDTRKQLAENLVVIGGTSMLPGFLHRLLAEIRYLVEKPKYKKALGTKTFRIHTPPAKANCVAWLGGAIFGALQDILGSRSVSKEYYNQTGRIPDWCSLNNPPLEMMFDVGKTQPPLMKRAFSTEK</sequence>
<name>ARP10_HUMAN</name>
<reference key="1">
    <citation type="journal article" date="2000" name="Proc. Natl. Acad. Sci. U.S.A.">
        <title>Gene expression profiling in the human hypothalamus-pituitary-adrenal axis and full-length cDNA cloning.</title>
        <authorList>
            <person name="Hu R.-M."/>
            <person name="Han Z.-G."/>
            <person name="Song H.-D."/>
            <person name="Peng Y.-D."/>
            <person name="Huang Q.-H."/>
            <person name="Ren S.-X."/>
            <person name="Gu Y.-J."/>
            <person name="Huang C.-H."/>
            <person name="Li Y.-B."/>
            <person name="Jiang C.-L."/>
            <person name="Fu G."/>
            <person name="Zhang Q.-H."/>
            <person name="Gu B.-W."/>
            <person name="Dai M."/>
            <person name="Mao Y.-F."/>
            <person name="Gao G.-F."/>
            <person name="Rong R."/>
            <person name="Ye M."/>
            <person name="Zhou J."/>
            <person name="Xu S.-H."/>
            <person name="Gu J."/>
            <person name="Shi J.-X."/>
            <person name="Jin W.-R."/>
            <person name="Zhang C.-K."/>
            <person name="Wu T.-M."/>
            <person name="Huang G.-Y."/>
            <person name="Chen Z."/>
            <person name="Chen M.-D."/>
            <person name="Chen J.-L."/>
        </authorList>
    </citation>
    <scope>NUCLEOTIDE SEQUENCE [MRNA]</scope>
    <source>
        <tissue>Hypothalamus</tissue>
    </source>
</reference>
<reference key="2">
    <citation type="journal article" date="2004" name="Nat. Genet.">
        <title>Complete sequencing and characterization of 21,243 full-length human cDNAs.</title>
        <authorList>
            <person name="Ota T."/>
            <person name="Suzuki Y."/>
            <person name="Nishikawa T."/>
            <person name="Otsuki T."/>
            <person name="Sugiyama T."/>
            <person name="Irie R."/>
            <person name="Wakamatsu A."/>
            <person name="Hayashi K."/>
            <person name="Sato H."/>
            <person name="Nagai K."/>
            <person name="Kimura K."/>
            <person name="Makita H."/>
            <person name="Sekine M."/>
            <person name="Obayashi M."/>
            <person name="Nishi T."/>
            <person name="Shibahara T."/>
            <person name="Tanaka T."/>
            <person name="Ishii S."/>
            <person name="Yamamoto J."/>
            <person name="Saito K."/>
            <person name="Kawai Y."/>
            <person name="Isono Y."/>
            <person name="Nakamura Y."/>
            <person name="Nagahari K."/>
            <person name="Murakami K."/>
            <person name="Yasuda T."/>
            <person name="Iwayanagi T."/>
            <person name="Wagatsuma M."/>
            <person name="Shiratori A."/>
            <person name="Sudo H."/>
            <person name="Hosoiri T."/>
            <person name="Kaku Y."/>
            <person name="Kodaira H."/>
            <person name="Kondo H."/>
            <person name="Sugawara M."/>
            <person name="Takahashi M."/>
            <person name="Kanda K."/>
            <person name="Yokoi T."/>
            <person name="Furuya T."/>
            <person name="Kikkawa E."/>
            <person name="Omura Y."/>
            <person name="Abe K."/>
            <person name="Kamihara K."/>
            <person name="Katsuta N."/>
            <person name="Sato K."/>
            <person name="Tanikawa M."/>
            <person name="Yamazaki M."/>
            <person name="Ninomiya K."/>
            <person name="Ishibashi T."/>
            <person name="Yamashita H."/>
            <person name="Murakawa K."/>
            <person name="Fujimori K."/>
            <person name="Tanai H."/>
            <person name="Kimata M."/>
            <person name="Watanabe M."/>
            <person name="Hiraoka S."/>
            <person name="Chiba Y."/>
            <person name="Ishida S."/>
            <person name="Ono Y."/>
            <person name="Takiguchi S."/>
            <person name="Watanabe S."/>
            <person name="Yosida M."/>
            <person name="Hotuta T."/>
            <person name="Kusano J."/>
            <person name="Kanehori K."/>
            <person name="Takahashi-Fujii A."/>
            <person name="Hara H."/>
            <person name="Tanase T.-O."/>
            <person name="Nomura Y."/>
            <person name="Togiya S."/>
            <person name="Komai F."/>
            <person name="Hara R."/>
            <person name="Takeuchi K."/>
            <person name="Arita M."/>
            <person name="Imose N."/>
            <person name="Musashino K."/>
            <person name="Yuuki H."/>
            <person name="Oshima A."/>
            <person name="Sasaki N."/>
            <person name="Aotsuka S."/>
            <person name="Yoshikawa Y."/>
            <person name="Matsunawa H."/>
            <person name="Ichihara T."/>
            <person name="Shiohata N."/>
            <person name="Sano S."/>
            <person name="Moriya S."/>
            <person name="Momiyama H."/>
            <person name="Satoh N."/>
            <person name="Takami S."/>
            <person name="Terashima Y."/>
            <person name="Suzuki O."/>
            <person name="Nakagawa S."/>
            <person name="Senoh A."/>
            <person name="Mizoguchi H."/>
            <person name="Goto Y."/>
            <person name="Shimizu F."/>
            <person name="Wakebe H."/>
            <person name="Hishigaki H."/>
            <person name="Watanabe T."/>
            <person name="Sugiyama A."/>
            <person name="Takemoto M."/>
            <person name="Kawakami B."/>
            <person name="Yamazaki M."/>
            <person name="Watanabe K."/>
            <person name="Kumagai A."/>
            <person name="Itakura S."/>
            <person name="Fukuzumi Y."/>
            <person name="Fujimori Y."/>
            <person name="Komiyama M."/>
            <person name="Tashiro H."/>
            <person name="Tanigami A."/>
            <person name="Fujiwara T."/>
            <person name="Ono T."/>
            <person name="Yamada K."/>
            <person name="Fujii Y."/>
            <person name="Ozaki K."/>
            <person name="Hirao M."/>
            <person name="Ohmori Y."/>
            <person name="Kawabata A."/>
            <person name="Hikiji T."/>
            <person name="Kobatake N."/>
            <person name="Inagaki H."/>
            <person name="Ikema Y."/>
            <person name="Okamoto S."/>
            <person name="Okitani R."/>
            <person name="Kawakami T."/>
            <person name="Noguchi S."/>
            <person name="Itoh T."/>
            <person name="Shigeta K."/>
            <person name="Senba T."/>
            <person name="Matsumura K."/>
            <person name="Nakajima Y."/>
            <person name="Mizuno T."/>
            <person name="Morinaga M."/>
            <person name="Sasaki M."/>
            <person name="Togashi T."/>
            <person name="Oyama M."/>
            <person name="Hata H."/>
            <person name="Watanabe M."/>
            <person name="Komatsu T."/>
            <person name="Mizushima-Sugano J."/>
            <person name="Satoh T."/>
            <person name="Shirai Y."/>
            <person name="Takahashi Y."/>
            <person name="Nakagawa K."/>
            <person name="Okumura K."/>
            <person name="Nagase T."/>
            <person name="Nomura N."/>
            <person name="Kikuchi H."/>
            <person name="Masuho Y."/>
            <person name="Yamashita R."/>
            <person name="Nakai K."/>
            <person name="Yada T."/>
            <person name="Nakamura Y."/>
            <person name="Ohara O."/>
            <person name="Isogai T."/>
            <person name="Sugano S."/>
        </authorList>
    </citation>
    <scope>NUCLEOTIDE SEQUENCE [LARGE SCALE MRNA]</scope>
</reference>
<reference key="3">
    <citation type="journal article" date="2004" name="Genome Res.">
        <title>The status, quality, and expansion of the NIH full-length cDNA project: the Mammalian Gene Collection (MGC).</title>
        <authorList>
            <consortium name="The MGC Project Team"/>
        </authorList>
    </citation>
    <scope>NUCLEOTIDE SEQUENCE [LARGE SCALE MRNA]</scope>
    <source>
        <tissue>Ovary</tissue>
    </source>
</reference>
<reference key="4">
    <citation type="journal article" date="2011" name="BMC Syst. Biol.">
        <title>Initial characterization of the human central proteome.</title>
        <authorList>
            <person name="Burkard T.R."/>
            <person name="Planyavsky M."/>
            <person name="Kaupe I."/>
            <person name="Breitwieser F.P."/>
            <person name="Buerckstuemmer T."/>
            <person name="Bennett K.L."/>
            <person name="Superti-Furga G."/>
            <person name="Colinge J."/>
        </authorList>
    </citation>
    <scope>IDENTIFICATION BY MASS SPECTROMETRY [LARGE SCALE ANALYSIS]</scope>
</reference>
<evidence type="ECO:0000250" key="1">
    <source>
        <dbReference type="UniProtKB" id="I3LHK5"/>
    </source>
</evidence>
<evidence type="ECO:0000305" key="2"/>
<accession>Q9NZ32</accession>
<accession>Q9H9Y5</accession>
<accession>Q9NWY2</accession>
<dbReference type="EMBL" id="AF220190">
    <property type="protein sequence ID" value="AAF67655.1"/>
    <property type="molecule type" value="mRNA"/>
</dbReference>
<dbReference type="EMBL" id="AK000544">
    <property type="protein sequence ID" value="BAA91243.1"/>
    <property type="molecule type" value="mRNA"/>
</dbReference>
<dbReference type="EMBL" id="AK022534">
    <property type="protein sequence ID" value="BAB14083.1"/>
    <property type="molecule type" value="mRNA"/>
</dbReference>
<dbReference type="EMBL" id="BC011997">
    <property type="protein sequence ID" value="AAH11997.1"/>
    <property type="molecule type" value="mRNA"/>
</dbReference>
<dbReference type="CCDS" id="CCDS32090.1"/>
<dbReference type="RefSeq" id="NP_060947.1">
    <property type="nucleotide sequence ID" value="NM_018477.3"/>
</dbReference>
<dbReference type="SMR" id="Q9NZ32"/>
<dbReference type="BioGRID" id="120962">
    <property type="interactions" value="125"/>
</dbReference>
<dbReference type="FunCoup" id="Q9NZ32">
    <property type="interactions" value="2235"/>
</dbReference>
<dbReference type="IntAct" id="Q9NZ32">
    <property type="interactions" value="70"/>
</dbReference>
<dbReference type="MINT" id="Q9NZ32"/>
<dbReference type="STRING" id="9606.ENSP00000254286"/>
<dbReference type="GlyGen" id="Q9NZ32">
    <property type="glycosylation" value="1 site, 1 O-linked glycan (1 site)"/>
</dbReference>
<dbReference type="iPTMnet" id="Q9NZ32"/>
<dbReference type="MetOSite" id="Q9NZ32"/>
<dbReference type="PhosphoSitePlus" id="Q9NZ32"/>
<dbReference type="SwissPalm" id="Q9NZ32"/>
<dbReference type="BioMuta" id="ACTR10"/>
<dbReference type="DMDM" id="27923739"/>
<dbReference type="jPOST" id="Q9NZ32"/>
<dbReference type="MassIVE" id="Q9NZ32"/>
<dbReference type="PaxDb" id="9606-ENSP00000254286"/>
<dbReference type="PeptideAtlas" id="Q9NZ32"/>
<dbReference type="ProteomicsDB" id="83317"/>
<dbReference type="Pumba" id="Q9NZ32"/>
<dbReference type="Antibodypedia" id="24149">
    <property type="antibodies" value="96 antibodies from 24 providers"/>
</dbReference>
<dbReference type="DNASU" id="55860"/>
<dbReference type="Ensembl" id="ENST00000254286.9">
    <property type="protein sequence ID" value="ENSP00000254286.4"/>
    <property type="gene ID" value="ENSG00000131966.14"/>
</dbReference>
<dbReference type="GeneID" id="55860"/>
<dbReference type="KEGG" id="hsa:55860"/>
<dbReference type="MANE-Select" id="ENST00000254286.9">
    <property type="protein sequence ID" value="ENSP00000254286.4"/>
    <property type="RefSeq nucleotide sequence ID" value="NM_018477.3"/>
    <property type="RefSeq protein sequence ID" value="NP_060947.1"/>
</dbReference>
<dbReference type="UCSC" id="uc001xdf.4">
    <property type="organism name" value="human"/>
</dbReference>
<dbReference type="AGR" id="HGNC:17372"/>
<dbReference type="CTD" id="55860"/>
<dbReference type="DisGeNET" id="55860"/>
<dbReference type="GeneCards" id="ACTR10"/>
<dbReference type="HGNC" id="HGNC:17372">
    <property type="gene designation" value="ACTR10"/>
</dbReference>
<dbReference type="HPA" id="ENSG00000131966">
    <property type="expression patterns" value="Low tissue specificity"/>
</dbReference>
<dbReference type="MIM" id="619731">
    <property type="type" value="gene"/>
</dbReference>
<dbReference type="neXtProt" id="NX_Q9NZ32"/>
<dbReference type="OpenTargets" id="ENSG00000131966"/>
<dbReference type="PharmGKB" id="PA134899463"/>
<dbReference type="VEuPathDB" id="HostDB:ENSG00000131966"/>
<dbReference type="eggNOG" id="KOG0676">
    <property type="taxonomic scope" value="Eukaryota"/>
</dbReference>
<dbReference type="GeneTree" id="ENSGT00910000144250"/>
<dbReference type="HOGENOM" id="CLU_027965_2_1_1"/>
<dbReference type="InParanoid" id="Q9NZ32"/>
<dbReference type="OMA" id="WERDNDN"/>
<dbReference type="OrthoDB" id="337660at2759"/>
<dbReference type="PAN-GO" id="Q9NZ32">
    <property type="GO annotations" value="2 GO annotations based on evolutionary models"/>
</dbReference>
<dbReference type="PhylomeDB" id="Q9NZ32"/>
<dbReference type="TreeFam" id="TF315151"/>
<dbReference type="PathwayCommons" id="Q9NZ32"/>
<dbReference type="Reactome" id="R-HSA-2132295">
    <property type="pathway name" value="MHC class II antigen presentation"/>
</dbReference>
<dbReference type="Reactome" id="R-HSA-3371497">
    <property type="pathway name" value="HSP90 chaperone cycle for steroid hormone receptors (SHR) in the presence of ligand"/>
</dbReference>
<dbReference type="Reactome" id="R-HSA-6798695">
    <property type="pathway name" value="Neutrophil degranulation"/>
</dbReference>
<dbReference type="Reactome" id="R-HSA-6807878">
    <property type="pathway name" value="COPI-mediated anterograde transport"/>
</dbReference>
<dbReference type="Reactome" id="R-HSA-6811436">
    <property type="pathway name" value="COPI-independent Golgi-to-ER retrograde traffic"/>
</dbReference>
<dbReference type="SignaLink" id="Q9NZ32"/>
<dbReference type="BioGRID-ORCS" id="55860">
    <property type="hits" value="778 hits in 1150 CRISPR screens"/>
</dbReference>
<dbReference type="ChiTaRS" id="ACTR10">
    <property type="organism name" value="human"/>
</dbReference>
<dbReference type="GenomeRNAi" id="55860"/>
<dbReference type="Pharos" id="Q9NZ32">
    <property type="development level" value="Tbio"/>
</dbReference>
<dbReference type="PRO" id="PR:Q9NZ32"/>
<dbReference type="Proteomes" id="UP000005640">
    <property type="component" value="Chromosome 14"/>
</dbReference>
<dbReference type="RNAct" id="Q9NZ32">
    <property type="molecule type" value="protein"/>
</dbReference>
<dbReference type="Bgee" id="ENSG00000131966">
    <property type="expression patterns" value="Expressed in secondary oocyte and 202 other cell types or tissues"/>
</dbReference>
<dbReference type="ExpressionAtlas" id="Q9NZ32">
    <property type="expression patterns" value="baseline and differential"/>
</dbReference>
<dbReference type="GO" id="GO:1904115">
    <property type="term" value="C:axon cytoplasm"/>
    <property type="evidence" value="ECO:0007669"/>
    <property type="project" value="GOC"/>
</dbReference>
<dbReference type="GO" id="GO:0035578">
    <property type="term" value="C:azurophil granule lumen"/>
    <property type="evidence" value="ECO:0000304"/>
    <property type="project" value="Reactome"/>
</dbReference>
<dbReference type="GO" id="GO:0005829">
    <property type="term" value="C:cytosol"/>
    <property type="evidence" value="ECO:0000304"/>
    <property type="project" value="Reactome"/>
</dbReference>
<dbReference type="GO" id="GO:0005869">
    <property type="term" value="C:dynactin complex"/>
    <property type="evidence" value="ECO:0000318"/>
    <property type="project" value="GO_Central"/>
</dbReference>
<dbReference type="GO" id="GO:0005576">
    <property type="term" value="C:extracellular region"/>
    <property type="evidence" value="ECO:0000304"/>
    <property type="project" value="Reactome"/>
</dbReference>
<dbReference type="GO" id="GO:1904813">
    <property type="term" value="C:ficolin-1-rich granule lumen"/>
    <property type="evidence" value="ECO:0000304"/>
    <property type="project" value="Reactome"/>
</dbReference>
<dbReference type="GO" id="GO:0098958">
    <property type="term" value="P:retrograde axonal transport of mitochondrion"/>
    <property type="evidence" value="ECO:0000318"/>
    <property type="project" value="GO_Central"/>
</dbReference>
<dbReference type="CDD" id="cd10207">
    <property type="entry name" value="ASKHA_NBD_Arp10"/>
    <property type="match status" value="1"/>
</dbReference>
<dbReference type="FunFam" id="3.30.420.40:FF:000762">
    <property type="entry name" value="Actin-related protein 10"/>
    <property type="match status" value="1"/>
</dbReference>
<dbReference type="FunFam" id="3.30.420.40:FF:000075">
    <property type="entry name" value="Actin-related protein 10 homolog"/>
    <property type="match status" value="1"/>
</dbReference>
<dbReference type="FunFam" id="3.90.640.10:FF:000017">
    <property type="entry name" value="Actin-related protein 10 homolog"/>
    <property type="match status" value="1"/>
</dbReference>
<dbReference type="Gene3D" id="3.30.420.40">
    <property type="match status" value="2"/>
</dbReference>
<dbReference type="Gene3D" id="3.90.640.10">
    <property type="entry name" value="Actin, Chain A, domain 4"/>
    <property type="match status" value="1"/>
</dbReference>
<dbReference type="InterPro" id="IPR004000">
    <property type="entry name" value="Actin"/>
</dbReference>
<dbReference type="InterPro" id="IPR043129">
    <property type="entry name" value="ATPase_NBD"/>
</dbReference>
<dbReference type="PANTHER" id="PTHR11937">
    <property type="entry name" value="ACTIN"/>
    <property type="match status" value="1"/>
</dbReference>
<dbReference type="Pfam" id="PF00022">
    <property type="entry name" value="Actin"/>
    <property type="match status" value="1"/>
</dbReference>
<dbReference type="SMART" id="SM00268">
    <property type="entry name" value="ACTIN"/>
    <property type="match status" value="1"/>
</dbReference>
<dbReference type="SUPFAM" id="SSF53067">
    <property type="entry name" value="Actin-like ATPase domain"/>
    <property type="match status" value="2"/>
</dbReference>
<keyword id="KW-0963">Cytoplasm</keyword>
<keyword id="KW-0206">Cytoskeleton</keyword>
<keyword id="KW-1267">Proteomics identification</keyword>
<keyword id="KW-1185">Reference proteome</keyword>
<comment type="function">
    <text evidence="1">Part of the dynactin complex that activates the molecular motor dynein for ultra-processive transport along microtubules.</text>
</comment>
<comment type="subunit">
    <text evidence="1">Subunit of dynactin, a multiprotein complex part of a tripartite complex with dynein and a adapter, such as BICDL1, BICD2 or HOOK3. The dynactin complex is built around ACTR1A/ACTB filament and consists of an actin-related filament composed of a shoulder domain, a pointed end and a barbed end. Its length is defined by its flexible shoulder domain. The soulder is composed of 2 DCTN1 subunits, 4 DCTN2 and 2 DCTN3. The 4 DCNT2 (via N-terminus) bind the ACTR1A filament and act as molecular rulers to determine the length. The pointed end is important for binding dynein-dynactin cargo adapters. Consists of 4 subunits: ACTR10, DCNT4, DCTN5 and DCTN6. The barbed end is composed of a CAPZA1:CAPZB heterodimers, which binds ACTR1A/ACTB filament and dynactin and stabilizes dynactin.</text>
</comment>
<comment type="interaction">
    <interactant intactId="EBI-2559426">
        <id>Q9NZ32</id>
    </interactant>
    <interactant intactId="EBI-2134033">
        <id>Q9UJW0</id>
        <label>DCTN4</label>
    </interactant>
    <organismsDiffer>false</organismsDiffer>
    <experiments>3</experiments>
</comment>
<comment type="interaction">
    <interactant intactId="EBI-2559426">
        <id>Q9NZ32</id>
    </interactant>
    <interactant intactId="EBI-948001">
        <id>Q15323</id>
        <label>KRT31</label>
    </interactant>
    <organismsDiffer>false</organismsDiffer>
    <experiments>3</experiments>
</comment>
<comment type="interaction">
    <interactant intactId="EBI-2559426">
        <id>Q9NZ32</id>
    </interactant>
    <interactant intactId="EBI-372578">
        <id>Q9UJ70</id>
        <label>NAGK</label>
    </interactant>
    <organismsDiffer>false</organismsDiffer>
    <experiments>3</experiments>
</comment>
<comment type="subcellular location">
    <subcellularLocation>
        <location evidence="1">Cytoplasm</location>
        <location evidence="1">Cytoskeleton</location>
    </subcellularLocation>
</comment>
<comment type="similarity">
    <text evidence="2">Belongs to the actin family.</text>
</comment>
<protein>
    <recommendedName>
        <fullName>Actin-related protein 10</fullName>
    </recommendedName>
    <alternativeName>
        <fullName>Actin-related protein 11</fullName>
        <shortName>hARP11</shortName>
    </alternativeName>
</protein>
<feature type="chain" id="PRO_0000089131" description="Actin-related protein 10">
    <location>
        <begin position="1"/>
        <end position="417"/>
    </location>
</feature>
<feature type="sequence conflict" description="In Ref. 2; BAA91243." evidence="2" ref="2">
    <original>R</original>
    <variation>K</variation>
    <location>
        <position position="53"/>
    </location>
</feature>
<feature type="sequence conflict" description="In Ref. 2; BAA91243." evidence="2" ref="2">
    <original>E</original>
    <variation>K</variation>
    <location>
        <position position="93"/>
    </location>
</feature>
<feature type="sequence conflict" description="In Ref. 2; BAB14083." evidence="2" ref="2">
    <original>D</original>
    <variation>G</variation>
    <location>
        <position position="219"/>
    </location>
</feature>
<proteinExistence type="evidence at protein level"/>